<reference key="1">
    <citation type="journal article" date="2008" name="Proc. Natl. Acad. Sci. U.S.A.">
        <title>Nitrogen fixation island and rhizosphere competence traits in the genome of root-associated Pseudomonas stutzeri A1501.</title>
        <authorList>
            <person name="Yan Y."/>
            <person name="Yang J."/>
            <person name="Dou Y."/>
            <person name="Chen M."/>
            <person name="Ping S."/>
            <person name="Peng J."/>
            <person name="Lu W."/>
            <person name="Zhang W."/>
            <person name="Yao Z."/>
            <person name="Li H."/>
            <person name="Liu W."/>
            <person name="He S."/>
            <person name="Geng L."/>
            <person name="Zhang X."/>
            <person name="Yang F."/>
            <person name="Yu H."/>
            <person name="Zhan Y."/>
            <person name="Li D."/>
            <person name="Lin Z."/>
            <person name="Wang Y."/>
            <person name="Elmerich C."/>
            <person name="Lin M."/>
            <person name="Jin Q."/>
        </authorList>
    </citation>
    <scope>NUCLEOTIDE SEQUENCE [LARGE SCALE GENOMIC DNA]</scope>
    <source>
        <strain>A1501</strain>
    </source>
</reference>
<sequence>MDIGLREWLIVIGIIVIAGILFDGWRRMRGGKGKLKFKLDRSLSNLPDVDDSPELLGPARVVNREHEPSLSENDLPPVTARESSKKRRQDEPYQGDLQLSTEEPVPTLLDPVVGDDDDLQERPQKEQAPVEEVLVINVISRDPHGFRGPALLQNILESGLRFGEMDIFHRHESMAGNGEVLFSMANAVKPGTFDLDDIDHFTTPAVSFFLGLPGPRHPKQAFDVMVAAARKLSQELNGELKDDQRSVLTAQTIEHYRQRIVEFERRQMTIKQR</sequence>
<gene>
    <name evidence="1" type="primary">zipA</name>
    <name type="ordered locus">PST_1856</name>
</gene>
<evidence type="ECO:0000255" key="1">
    <source>
        <dbReference type="HAMAP-Rule" id="MF_00509"/>
    </source>
</evidence>
<evidence type="ECO:0000256" key="2">
    <source>
        <dbReference type="SAM" id="MobiDB-lite"/>
    </source>
</evidence>
<feature type="chain" id="PRO_1000015151" description="Cell division protein ZipA">
    <location>
        <begin position="1"/>
        <end position="273"/>
    </location>
</feature>
<feature type="topological domain" description="Periplasmic" evidence="1">
    <location>
        <position position="1"/>
    </location>
</feature>
<feature type="transmembrane region" description="Helical" evidence="1">
    <location>
        <begin position="2"/>
        <end position="22"/>
    </location>
</feature>
<feature type="topological domain" description="Cytoplasmic" evidence="1">
    <location>
        <begin position="23"/>
        <end position="273"/>
    </location>
</feature>
<feature type="region of interest" description="Disordered" evidence="2">
    <location>
        <begin position="61"/>
        <end position="127"/>
    </location>
</feature>
<accession>A4VKM9</accession>
<comment type="function">
    <text evidence="1">Essential cell division protein that stabilizes the FtsZ protofilaments by cross-linking them and that serves as a cytoplasmic membrane anchor for the Z ring. Also required for the recruitment to the septal ring of downstream cell division proteins.</text>
</comment>
<comment type="subunit">
    <text evidence="1">Interacts with FtsZ via their C-terminal domains.</text>
</comment>
<comment type="subcellular location">
    <subcellularLocation>
        <location evidence="1">Cell inner membrane</location>
        <topology evidence="1">Single-pass type I membrane protein</topology>
    </subcellularLocation>
    <text evidence="1">Localizes to the Z ring in an FtsZ-dependent manner.</text>
</comment>
<comment type="similarity">
    <text evidence="1">Belongs to the ZipA family.</text>
</comment>
<organism>
    <name type="scientific">Stutzerimonas stutzeri (strain A1501)</name>
    <name type="common">Pseudomonas stutzeri</name>
    <dbReference type="NCBI Taxonomy" id="379731"/>
    <lineage>
        <taxon>Bacteria</taxon>
        <taxon>Pseudomonadati</taxon>
        <taxon>Pseudomonadota</taxon>
        <taxon>Gammaproteobacteria</taxon>
        <taxon>Pseudomonadales</taxon>
        <taxon>Pseudomonadaceae</taxon>
        <taxon>Stutzerimonas</taxon>
    </lineage>
</organism>
<name>ZIPA_STUS1</name>
<dbReference type="EMBL" id="CP000304">
    <property type="protein sequence ID" value="ABP79530.1"/>
    <property type="molecule type" value="Genomic_DNA"/>
</dbReference>
<dbReference type="RefSeq" id="WP_011913007.1">
    <property type="nucleotide sequence ID" value="NC_009434.1"/>
</dbReference>
<dbReference type="SMR" id="A4VKM9"/>
<dbReference type="KEGG" id="psa:PST_1856"/>
<dbReference type="eggNOG" id="COG3115">
    <property type="taxonomic scope" value="Bacteria"/>
</dbReference>
<dbReference type="HOGENOM" id="CLU_030174_0_1_6"/>
<dbReference type="Proteomes" id="UP000000233">
    <property type="component" value="Chromosome"/>
</dbReference>
<dbReference type="GO" id="GO:0032153">
    <property type="term" value="C:cell division site"/>
    <property type="evidence" value="ECO:0007669"/>
    <property type="project" value="UniProtKB-UniRule"/>
</dbReference>
<dbReference type="GO" id="GO:0005886">
    <property type="term" value="C:plasma membrane"/>
    <property type="evidence" value="ECO:0007669"/>
    <property type="project" value="UniProtKB-SubCell"/>
</dbReference>
<dbReference type="GO" id="GO:0000917">
    <property type="term" value="P:division septum assembly"/>
    <property type="evidence" value="ECO:0007669"/>
    <property type="project" value="TreeGrafter"/>
</dbReference>
<dbReference type="GO" id="GO:0043093">
    <property type="term" value="P:FtsZ-dependent cytokinesis"/>
    <property type="evidence" value="ECO:0007669"/>
    <property type="project" value="UniProtKB-UniRule"/>
</dbReference>
<dbReference type="Gene3D" id="3.30.1400.10">
    <property type="entry name" value="ZipA, C-terminal FtsZ-binding domain"/>
    <property type="match status" value="1"/>
</dbReference>
<dbReference type="HAMAP" id="MF_00509">
    <property type="entry name" value="ZipA"/>
    <property type="match status" value="1"/>
</dbReference>
<dbReference type="InterPro" id="IPR011919">
    <property type="entry name" value="Cell_div_ZipA"/>
</dbReference>
<dbReference type="InterPro" id="IPR007449">
    <property type="entry name" value="ZipA_FtsZ-bd_C"/>
</dbReference>
<dbReference type="InterPro" id="IPR036765">
    <property type="entry name" value="ZipA_FtsZ-bd_C_sf"/>
</dbReference>
<dbReference type="NCBIfam" id="TIGR02205">
    <property type="entry name" value="septum_zipA"/>
    <property type="match status" value="1"/>
</dbReference>
<dbReference type="PANTHER" id="PTHR38685">
    <property type="entry name" value="CELL DIVISION PROTEIN ZIPA"/>
    <property type="match status" value="1"/>
</dbReference>
<dbReference type="PANTHER" id="PTHR38685:SF1">
    <property type="entry name" value="CELL DIVISION PROTEIN ZIPA"/>
    <property type="match status" value="1"/>
</dbReference>
<dbReference type="Pfam" id="PF04354">
    <property type="entry name" value="ZipA_C"/>
    <property type="match status" value="1"/>
</dbReference>
<dbReference type="SMART" id="SM00771">
    <property type="entry name" value="ZipA_C"/>
    <property type="match status" value="1"/>
</dbReference>
<dbReference type="SUPFAM" id="SSF64383">
    <property type="entry name" value="Cell-division protein ZipA, C-terminal domain"/>
    <property type="match status" value="1"/>
</dbReference>
<keyword id="KW-0131">Cell cycle</keyword>
<keyword id="KW-0132">Cell division</keyword>
<keyword id="KW-0997">Cell inner membrane</keyword>
<keyword id="KW-1003">Cell membrane</keyword>
<keyword id="KW-0472">Membrane</keyword>
<keyword id="KW-1185">Reference proteome</keyword>
<keyword id="KW-0812">Transmembrane</keyword>
<keyword id="KW-1133">Transmembrane helix</keyword>
<proteinExistence type="inferred from homology"/>
<protein>
    <recommendedName>
        <fullName evidence="1">Cell division protein ZipA</fullName>
    </recommendedName>
</protein>